<gene>
    <name evidence="1" type="primary">smg</name>
    <name type="ordered locus">EcolC_0429</name>
</gene>
<feature type="chain" id="PRO_1000082446" description="Protein Smg">
    <location>
        <begin position="1"/>
        <end position="157"/>
    </location>
</feature>
<protein>
    <recommendedName>
        <fullName evidence="1">Protein Smg</fullName>
    </recommendedName>
</protein>
<reference key="1">
    <citation type="submission" date="2008-02" db="EMBL/GenBank/DDBJ databases">
        <title>Complete sequence of Escherichia coli C str. ATCC 8739.</title>
        <authorList>
            <person name="Copeland A."/>
            <person name="Lucas S."/>
            <person name="Lapidus A."/>
            <person name="Glavina del Rio T."/>
            <person name="Dalin E."/>
            <person name="Tice H."/>
            <person name="Bruce D."/>
            <person name="Goodwin L."/>
            <person name="Pitluck S."/>
            <person name="Kiss H."/>
            <person name="Brettin T."/>
            <person name="Detter J.C."/>
            <person name="Han C."/>
            <person name="Kuske C.R."/>
            <person name="Schmutz J."/>
            <person name="Larimer F."/>
            <person name="Land M."/>
            <person name="Hauser L."/>
            <person name="Kyrpides N."/>
            <person name="Mikhailova N."/>
            <person name="Ingram L."/>
            <person name="Richardson P."/>
        </authorList>
    </citation>
    <scope>NUCLEOTIDE SEQUENCE [LARGE SCALE GENOMIC DNA]</scope>
    <source>
        <strain>ATCC 8739 / DSM 1576 / NBRC 3972 / NCIMB 8545 / WDCM 00012 / Crooks</strain>
    </source>
</reference>
<comment type="similarity">
    <text evidence="1">Belongs to the Smg family.</text>
</comment>
<organism>
    <name type="scientific">Escherichia coli (strain ATCC 8739 / DSM 1576 / NBRC 3972 / NCIMB 8545 / WDCM 00012 / Crooks)</name>
    <dbReference type="NCBI Taxonomy" id="481805"/>
    <lineage>
        <taxon>Bacteria</taxon>
        <taxon>Pseudomonadati</taxon>
        <taxon>Pseudomonadota</taxon>
        <taxon>Gammaproteobacteria</taxon>
        <taxon>Enterobacterales</taxon>
        <taxon>Enterobacteriaceae</taxon>
        <taxon>Escherichia</taxon>
    </lineage>
</organism>
<accession>B1IQ15</accession>
<proteinExistence type="inferred from homology"/>
<name>SMG_ECOLC</name>
<sequence length="157" mass="18510">MFDVLMYLFETYIHTEAELRVDQDKLEQDLTDAGFEREDIYNALLWLEKLADYQEGLAEPMQLASDPLSMRIYTPEECERLDASCRGFLLFLEQIQVLNLETREMVIERVLALDNAEFELDDLKWVILMVLFNIPGCENAYQQMEELLFEVNEGMLH</sequence>
<dbReference type="EMBL" id="CP000946">
    <property type="protein sequence ID" value="ACA76107.1"/>
    <property type="molecule type" value="Genomic_DNA"/>
</dbReference>
<dbReference type="RefSeq" id="WP_000460680.1">
    <property type="nucleotide sequence ID" value="NZ_MTFT01000014.1"/>
</dbReference>
<dbReference type="SMR" id="B1IQ15"/>
<dbReference type="GeneID" id="93778703"/>
<dbReference type="KEGG" id="ecl:EcolC_0429"/>
<dbReference type="HOGENOM" id="CLU_133242_0_0_6"/>
<dbReference type="HAMAP" id="MF_00598">
    <property type="entry name" value="Smg"/>
    <property type="match status" value="1"/>
</dbReference>
<dbReference type="InterPro" id="IPR007456">
    <property type="entry name" value="Smg"/>
</dbReference>
<dbReference type="NCBIfam" id="NF002897">
    <property type="entry name" value="PRK03430.1"/>
    <property type="match status" value="1"/>
</dbReference>
<dbReference type="PANTHER" id="PTHR38692">
    <property type="entry name" value="PROTEIN SMG"/>
    <property type="match status" value="1"/>
</dbReference>
<dbReference type="PANTHER" id="PTHR38692:SF1">
    <property type="entry name" value="PROTEIN SMG"/>
    <property type="match status" value="1"/>
</dbReference>
<dbReference type="Pfam" id="PF04361">
    <property type="entry name" value="DUF494"/>
    <property type="match status" value="1"/>
</dbReference>
<evidence type="ECO:0000255" key="1">
    <source>
        <dbReference type="HAMAP-Rule" id="MF_00598"/>
    </source>
</evidence>